<reference key="1">
    <citation type="journal article" date="2007" name="PLoS Genet.">
        <title>Patterns and implications of gene gain and loss in the evolution of Prochlorococcus.</title>
        <authorList>
            <person name="Kettler G.C."/>
            <person name="Martiny A.C."/>
            <person name="Huang K."/>
            <person name="Zucker J."/>
            <person name="Coleman M.L."/>
            <person name="Rodrigue S."/>
            <person name="Chen F."/>
            <person name="Lapidus A."/>
            <person name="Ferriera S."/>
            <person name="Johnson J."/>
            <person name="Steglich C."/>
            <person name="Church G.M."/>
            <person name="Richardson P."/>
            <person name="Chisholm S.W."/>
        </authorList>
    </citation>
    <scope>NUCLEOTIDE SEQUENCE [LARGE SCALE GENOMIC DNA]</scope>
    <source>
        <strain>NATL2A</strain>
    </source>
</reference>
<accession>Q46ID3</accession>
<dbReference type="EMBL" id="CP000095">
    <property type="protein sequence ID" value="AAZ58745.1"/>
    <property type="molecule type" value="Genomic_DNA"/>
</dbReference>
<dbReference type="RefSeq" id="WP_011295599.1">
    <property type="nucleotide sequence ID" value="NC_007335.2"/>
</dbReference>
<dbReference type="SMR" id="Q46ID3"/>
<dbReference type="STRING" id="59920.PMN2A_1255"/>
<dbReference type="KEGG" id="pmn:PMN2A_1255"/>
<dbReference type="HOGENOM" id="CLU_014218_8_2_3"/>
<dbReference type="OrthoDB" id="9804062at2"/>
<dbReference type="PhylomeDB" id="Q46ID3"/>
<dbReference type="Proteomes" id="UP000002535">
    <property type="component" value="Chromosome"/>
</dbReference>
<dbReference type="GO" id="GO:0009376">
    <property type="term" value="C:HslUV protease complex"/>
    <property type="evidence" value="ECO:0007669"/>
    <property type="project" value="TreeGrafter"/>
</dbReference>
<dbReference type="GO" id="GO:0005524">
    <property type="term" value="F:ATP binding"/>
    <property type="evidence" value="ECO:0007669"/>
    <property type="project" value="UniProtKB-UniRule"/>
</dbReference>
<dbReference type="GO" id="GO:0016887">
    <property type="term" value="F:ATP hydrolysis activity"/>
    <property type="evidence" value="ECO:0007669"/>
    <property type="project" value="InterPro"/>
</dbReference>
<dbReference type="GO" id="GO:0140662">
    <property type="term" value="F:ATP-dependent protein folding chaperone"/>
    <property type="evidence" value="ECO:0007669"/>
    <property type="project" value="InterPro"/>
</dbReference>
<dbReference type="GO" id="GO:0046983">
    <property type="term" value="F:protein dimerization activity"/>
    <property type="evidence" value="ECO:0007669"/>
    <property type="project" value="InterPro"/>
</dbReference>
<dbReference type="GO" id="GO:0051082">
    <property type="term" value="F:unfolded protein binding"/>
    <property type="evidence" value="ECO:0007669"/>
    <property type="project" value="UniProtKB-UniRule"/>
</dbReference>
<dbReference type="GO" id="GO:0008270">
    <property type="term" value="F:zinc ion binding"/>
    <property type="evidence" value="ECO:0007669"/>
    <property type="project" value="InterPro"/>
</dbReference>
<dbReference type="GO" id="GO:0051301">
    <property type="term" value="P:cell division"/>
    <property type="evidence" value="ECO:0007669"/>
    <property type="project" value="TreeGrafter"/>
</dbReference>
<dbReference type="GO" id="GO:0051603">
    <property type="term" value="P:proteolysis involved in protein catabolic process"/>
    <property type="evidence" value="ECO:0007669"/>
    <property type="project" value="TreeGrafter"/>
</dbReference>
<dbReference type="CDD" id="cd19497">
    <property type="entry name" value="RecA-like_ClpX"/>
    <property type="match status" value="1"/>
</dbReference>
<dbReference type="FunFam" id="1.10.8.60:FF:000002">
    <property type="entry name" value="ATP-dependent Clp protease ATP-binding subunit ClpX"/>
    <property type="match status" value="1"/>
</dbReference>
<dbReference type="FunFam" id="3.40.50.300:FF:000005">
    <property type="entry name" value="ATP-dependent Clp protease ATP-binding subunit ClpX"/>
    <property type="match status" value="1"/>
</dbReference>
<dbReference type="Gene3D" id="1.10.8.60">
    <property type="match status" value="1"/>
</dbReference>
<dbReference type="Gene3D" id="6.20.220.10">
    <property type="entry name" value="ClpX chaperone, C4-type zinc finger domain"/>
    <property type="match status" value="1"/>
</dbReference>
<dbReference type="Gene3D" id="3.40.50.300">
    <property type="entry name" value="P-loop containing nucleotide triphosphate hydrolases"/>
    <property type="match status" value="1"/>
</dbReference>
<dbReference type="HAMAP" id="MF_00175">
    <property type="entry name" value="ClpX"/>
    <property type="match status" value="1"/>
</dbReference>
<dbReference type="InterPro" id="IPR003593">
    <property type="entry name" value="AAA+_ATPase"/>
</dbReference>
<dbReference type="InterPro" id="IPR050052">
    <property type="entry name" value="ATP-dep_Clp_protease_ClpX"/>
</dbReference>
<dbReference type="InterPro" id="IPR003959">
    <property type="entry name" value="ATPase_AAA_core"/>
</dbReference>
<dbReference type="InterPro" id="IPR019489">
    <property type="entry name" value="Clp_ATPase_C"/>
</dbReference>
<dbReference type="InterPro" id="IPR004487">
    <property type="entry name" value="Clp_protease_ATP-bd_su_ClpX"/>
</dbReference>
<dbReference type="InterPro" id="IPR046425">
    <property type="entry name" value="ClpX_bact"/>
</dbReference>
<dbReference type="InterPro" id="IPR027417">
    <property type="entry name" value="P-loop_NTPase"/>
</dbReference>
<dbReference type="InterPro" id="IPR010603">
    <property type="entry name" value="Znf_CppX_C4"/>
</dbReference>
<dbReference type="InterPro" id="IPR038366">
    <property type="entry name" value="Znf_CppX_C4_sf"/>
</dbReference>
<dbReference type="NCBIfam" id="TIGR00382">
    <property type="entry name" value="clpX"/>
    <property type="match status" value="1"/>
</dbReference>
<dbReference type="NCBIfam" id="NF003745">
    <property type="entry name" value="PRK05342.1"/>
    <property type="match status" value="1"/>
</dbReference>
<dbReference type="PANTHER" id="PTHR48102:SF7">
    <property type="entry name" value="ATP-DEPENDENT CLP PROTEASE ATP-BINDING SUBUNIT CLPX-LIKE, MITOCHONDRIAL"/>
    <property type="match status" value="1"/>
</dbReference>
<dbReference type="PANTHER" id="PTHR48102">
    <property type="entry name" value="ATP-DEPENDENT CLP PROTEASE ATP-BINDING SUBUNIT CLPX-LIKE, MITOCHONDRIAL-RELATED"/>
    <property type="match status" value="1"/>
</dbReference>
<dbReference type="Pfam" id="PF07724">
    <property type="entry name" value="AAA_2"/>
    <property type="match status" value="1"/>
</dbReference>
<dbReference type="Pfam" id="PF10431">
    <property type="entry name" value="ClpB_D2-small"/>
    <property type="match status" value="1"/>
</dbReference>
<dbReference type="Pfam" id="PF06689">
    <property type="entry name" value="zf-C4_ClpX"/>
    <property type="match status" value="1"/>
</dbReference>
<dbReference type="SMART" id="SM00382">
    <property type="entry name" value="AAA"/>
    <property type="match status" value="1"/>
</dbReference>
<dbReference type="SMART" id="SM01086">
    <property type="entry name" value="ClpB_D2-small"/>
    <property type="match status" value="1"/>
</dbReference>
<dbReference type="SMART" id="SM00994">
    <property type="entry name" value="zf-C4_ClpX"/>
    <property type="match status" value="1"/>
</dbReference>
<dbReference type="SUPFAM" id="SSF57716">
    <property type="entry name" value="Glucocorticoid receptor-like (DNA-binding domain)"/>
    <property type="match status" value="1"/>
</dbReference>
<dbReference type="SUPFAM" id="SSF52540">
    <property type="entry name" value="P-loop containing nucleoside triphosphate hydrolases"/>
    <property type="match status" value="1"/>
</dbReference>
<dbReference type="PROSITE" id="PS51902">
    <property type="entry name" value="CLPX_ZB"/>
    <property type="match status" value="1"/>
</dbReference>
<comment type="function">
    <text evidence="1">ATP-dependent specificity component of the Clp protease. It directs the protease to specific substrates. Can perform chaperone functions in the absence of ClpP.</text>
</comment>
<comment type="subunit">
    <text evidence="1">Component of the ClpX-ClpP complex. Forms a hexameric ring that, in the presence of ATP, binds to fourteen ClpP subunits assembled into a disk-like structure with a central cavity, resembling the structure of eukaryotic proteasomes.</text>
</comment>
<comment type="similarity">
    <text evidence="1">Belongs to the ClpX chaperone family.</text>
</comment>
<sequence>MAKFEAHLKCSFCGKAQDQVRKLIAGPGVYICDECIDLCNEILDEELIDNPTHQRNGHEQSRKAKAATTTAKPAPTLASIPKPIEIKKFLDAQVVGQEPAKKILSVAVYNHYKRLAWKGDGSGETDLTATKLQKSNILLIGPTGCGKTLLAQTLAEMLDVPFAVADATTLTEAGYVGEDVENILLRLLQKADMDVDLAQRGIIYIDEIDKIARKSENPSITRDVSGEGVQQALLKMLEGTVANVPPQGGRKHPYGDSIQIDTSQILFICGGAFVGLDDVVEKRLGKNSIGFIQNENRTRTKSNRDRVGADLINDLEPDDLVKYGLIPEFIGRMPVSAILEPLNAKALESILTEPRDALVKQFRTLLSMDNVELSFDEDAVEAIAQEAYKRKTGARALRGIVEEIMLDLMYSLPSQTKIKNFNVTKKMVDESTGGKVVPLLSNEKRIVKESA</sequence>
<feature type="chain" id="PRO_1000024618" description="ATP-dependent Clp protease ATP-binding subunit ClpX">
    <location>
        <begin position="1"/>
        <end position="451"/>
    </location>
</feature>
<feature type="domain" description="ClpX-type ZB" evidence="2">
    <location>
        <begin position="1"/>
        <end position="51"/>
    </location>
</feature>
<feature type="region of interest" description="Disordered" evidence="3">
    <location>
        <begin position="50"/>
        <end position="73"/>
    </location>
</feature>
<feature type="binding site" evidence="2">
    <location>
        <position position="10"/>
    </location>
    <ligand>
        <name>Zn(2+)</name>
        <dbReference type="ChEBI" id="CHEBI:29105"/>
    </ligand>
</feature>
<feature type="binding site" evidence="2">
    <location>
        <position position="13"/>
    </location>
    <ligand>
        <name>Zn(2+)</name>
        <dbReference type="ChEBI" id="CHEBI:29105"/>
    </ligand>
</feature>
<feature type="binding site" evidence="2">
    <location>
        <position position="32"/>
    </location>
    <ligand>
        <name>Zn(2+)</name>
        <dbReference type="ChEBI" id="CHEBI:29105"/>
    </ligand>
</feature>
<feature type="binding site" evidence="2">
    <location>
        <position position="35"/>
    </location>
    <ligand>
        <name>Zn(2+)</name>
        <dbReference type="ChEBI" id="CHEBI:29105"/>
    </ligand>
</feature>
<feature type="binding site" evidence="1">
    <location>
        <begin position="142"/>
        <end position="149"/>
    </location>
    <ligand>
        <name>ATP</name>
        <dbReference type="ChEBI" id="CHEBI:30616"/>
    </ligand>
</feature>
<gene>
    <name evidence="1" type="primary">clpX</name>
    <name type="ordered locus">PMN2A_1255</name>
</gene>
<proteinExistence type="inferred from homology"/>
<protein>
    <recommendedName>
        <fullName evidence="1">ATP-dependent Clp protease ATP-binding subunit ClpX</fullName>
    </recommendedName>
</protein>
<name>CLPX_PROMT</name>
<evidence type="ECO:0000255" key="1">
    <source>
        <dbReference type="HAMAP-Rule" id="MF_00175"/>
    </source>
</evidence>
<evidence type="ECO:0000255" key="2">
    <source>
        <dbReference type="PROSITE-ProRule" id="PRU01250"/>
    </source>
</evidence>
<evidence type="ECO:0000256" key="3">
    <source>
        <dbReference type="SAM" id="MobiDB-lite"/>
    </source>
</evidence>
<organism>
    <name type="scientific">Prochlorococcus marinus (strain NATL2A)</name>
    <dbReference type="NCBI Taxonomy" id="59920"/>
    <lineage>
        <taxon>Bacteria</taxon>
        <taxon>Bacillati</taxon>
        <taxon>Cyanobacteriota</taxon>
        <taxon>Cyanophyceae</taxon>
        <taxon>Synechococcales</taxon>
        <taxon>Prochlorococcaceae</taxon>
        <taxon>Prochlorococcus</taxon>
    </lineage>
</organism>
<keyword id="KW-0067">ATP-binding</keyword>
<keyword id="KW-0143">Chaperone</keyword>
<keyword id="KW-0479">Metal-binding</keyword>
<keyword id="KW-0547">Nucleotide-binding</keyword>
<keyword id="KW-1185">Reference proteome</keyword>
<keyword id="KW-0862">Zinc</keyword>